<organism evidence="2">
    <name type="scientific">Odorrana grahami</name>
    <name type="common">Yunnanfu frog</name>
    <name type="synonym">Rana grahami</name>
    <dbReference type="NCBI Taxonomy" id="167935"/>
    <lineage>
        <taxon>Eukaryota</taxon>
        <taxon>Metazoa</taxon>
        <taxon>Chordata</taxon>
        <taxon>Craniata</taxon>
        <taxon>Vertebrata</taxon>
        <taxon>Euteleostomi</taxon>
        <taxon>Amphibia</taxon>
        <taxon>Batrachia</taxon>
        <taxon>Anura</taxon>
        <taxon>Neobatrachia</taxon>
        <taxon>Ranoidea</taxon>
        <taxon>Ranidae</taxon>
        <taxon>Odorrana</taxon>
    </lineage>
</organism>
<proteinExistence type="evidence at protein level"/>
<keyword id="KW-0044">Antibiotic</keyword>
<keyword id="KW-0929">Antimicrobial</keyword>
<keyword id="KW-0903">Direct protein sequencing</keyword>
<keyword id="KW-0964">Secreted</keyword>
<sequence length="33" mass="3368">GLLDTFKNLALNAAKSAGVSVLNSLSCKLSKTC</sequence>
<evidence type="ECO:0000269" key="1">
    <source>
    </source>
</evidence>
<evidence type="ECO:0000303" key="2">
    <source>
    </source>
</evidence>
<evidence type="ECO:0000305" key="3"/>
<evidence type="ECO:0000305" key="4">
    <source>
    </source>
</evidence>
<dbReference type="SMR" id="C0HL69"/>
<dbReference type="GO" id="GO:0005576">
    <property type="term" value="C:extracellular region"/>
    <property type="evidence" value="ECO:0007669"/>
    <property type="project" value="UniProtKB-SubCell"/>
</dbReference>
<dbReference type="GO" id="GO:0050829">
    <property type="term" value="P:defense response to Gram-negative bacterium"/>
    <property type="evidence" value="ECO:0000314"/>
    <property type="project" value="UniProtKB"/>
</dbReference>
<dbReference type="GO" id="GO:0050830">
    <property type="term" value="P:defense response to Gram-positive bacterium"/>
    <property type="evidence" value="ECO:0000314"/>
    <property type="project" value="UniProtKB"/>
</dbReference>
<dbReference type="GO" id="GO:0031640">
    <property type="term" value="P:killing of cells of another organism"/>
    <property type="evidence" value="ECO:0000314"/>
    <property type="project" value="UniProtKB"/>
</dbReference>
<dbReference type="InterPro" id="IPR012521">
    <property type="entry name" value="Antimicrobial_frog_2"/>
</dbReference>
<dbReference type="Pfam" id="PF08023">
    <property type="entry name" value="Antimicrobial_2"/>
    <property type="match status" value="1"/>
</dbReference>
<accession>C0HL69</accession>
<comment type="function">
    <text evidence="1">Antimicrobial peptide active against the Gram-positive bacterium S.aureus (MIC=50 uM) and against the Gram-negative bacteria E.coli (MIC=12.5 uM). Has no antifungal activity against C.albicans. Shows hemolytic activity against human erythrocytes only at high concentrations (LC(50)=140 uM).</text>
</comment>
<comment type="subcellular location">
    <subcellularLocation>
        <location evidence="1">Secreted</location>
    </subcellularLocation>
</comment>
<comment type="tissue specificity">
    <text evidence="4">Expressed by the skin glands.</text>
</comment>
<comment type="mass spectrometry" mass="3364.0" method="MALDI" evidence="1"/>
<comment type="similarity">
    <text evidence="3">Belongs to the frog skin active peptide (FSAP) family. Brevinin subfamily.</text>
</comment>
<feature type="peptide" id="PRO_0000443432" description="Brevinin-2GRa" evidence="1">
    <location>
        <begin position="1"/>
        <end position="33"/>
    </location>
</feature>
<reference evidence="3" key="1">
    <citation type="journal article" date="2006" name="Peptides">
        <title>Antimicrobial peptides from diverse families isolated from the skin of the Asian frog, Rana grahami.</title>
        <authorList>
            <person name="Conlon J.M."/>
            <person name="Al-Ghaferi N."/>
            <person name="Abraham B."/>
            <person name="Jiansheng H."/>
            <person name="Cosette P."/>
            <person name="Leprince J."/>
            <person name="Jouenne T."/>
            <person name="Vaudry H."/>
        </authorList>
    </citation>
    <scope>PROTEIN SEQUENCE</scope>
    <scope>FUNCTION</scope>
    <scope>MASS SPECTROMETRY</scope>
    <scope>SUBCELLULAR LOCATION</scope>
    <source>
        <tissue evidence="2">Skin</tissue>
    </source>
</reference>
<name>BR2A_ODOGR</name>
<protein>
    <recommendedName>
        <fullName evidence="2">Brevinin-2GRa</fullName>
    </recommendedName>
</protein>